<keyword id="KW-1185">Reference proteome</keyword>
<comment type="function">
    <text evidence="1">Involved in the modulation of the specificity of the ClpAP-mediated ATP-dependent protein degradation.</text>
</comment>
<comment type="subunit">
    <text evidence="1">Binds to the N-terminal domain of the chaperone ClpA.</text>
</comment>
<comment type="similarity">
    <text evidence="1">Belongs to the ClpS family.</text>
</comment>
<feature type="chain" id="PRO_1000132808" description="ATP-dependent Clp protease adapter protein ClpS">
    <location>
        <begin position="1"/>
        <end position="106"/>
    </location>
</feature>
<protein>
    <recommendedName>
        <fullName evidence="1">ATP-dependent Clp protease adapter protein ClpS</fullName>
    </recommendedName>
</protein>
<accession>B7LD74</accession>
<name>CLPS_ECO55</name>
<reference key="1">
    <citation type="journal article" date="2009" name="PLoS Genet.">
        <title>Organised genome dynamics in the Escherichia coli species results in highly diverse adaptive paths.</title>
        <authorList>
            <person name="Touchon M."/>
            <person name="Hoede C."/>
            <person name="Tenaillon O."/>
            <person name="Barbe V."/>
            <person name="Baeriswyl S."/>
            <person name="Bidet P."/>
            <person name="Bingen E."/>
            <person name="Bonacorsi S."/>
            <person name="Bouchier C."/>
            <person name="Bouvet O."/>
            <person name="Calteau A."/>
            <person name="Chiapello H."/>
            <person name="Clermont O."/>
            <person name="Cruveiller S."/>
            <person name="Danchin A."/>
            <person name="Diard M."/>
            <person name="Dossat C."/>
            <person name="Karoui M.E."/>
            <person name="Frapy E."/>
            <person name="Garry L."/>
            <person name="Ghigo J.M."/>
            <person name="Gilles A.M."/>
            <person name="Johnson J."/>
            <person name="Le Bouguenec C."/>
            <person name="Lescat M."/>
            <person name="Mangenot S."/>
            <person name="Martinez-Jehanne V."/>
            <person name="Matic I."/>
            <person name="Nassif X."/>
            <person name="Oztas S."/>
            <person name="Petit M.A."/>
            <person name="Pichon C."/>
            <person name="Rouy Z."/>
            <person name="Ruf C.S."/>
            <person name="Schneider D."/>
            <person name="Tourret J."/>
            <person name="Vacherie B."/>
            <person name="Vallenet D."/>
            <person name="Medigue C."/>
            <person name="Rocha E.P.C."/>
            <person name="Denamur E."/>
        </authorList>
    </citation>
    <scope>NUCLEOTIDE SEQUENCE [LARGE SCALE GENOMIC DNA]</scope>
    <source>
        <strain>55989 / EAEC</strain>
    </source>
</reference>
<gene>
    <name evidence="1" type="primary">clpS</name>
    <name type="ordered locus">EC55989_0926</name>
</gene>
<proteinExistence type="inferred from homology"/>
<evidence type="ECO:0000255" key="1">
    <source>
        <dbReference type="HAMAP-Rule" id="MF_00302"/>
    </source>
</evidence>
<organism>
    <name type="scientific">Escherichia coli (strain 55989 / EAEC)</name>
    <dbReference type="NCBI Taxonomy" id="585055"/>
    <lineage>
        <taxon>Bacteria</taxon>
        <taxon>Pseudomonadati</taxon>
        <taxon>Pseudomonadota</taxon>
        <taxon>Gammaproteobacteria</taxon>
        <taxon>Enterobacterales</taxon>
        <taxon>Enterobacteriaceae</taxon>
        <taxon>Escherichia</taxon>
    </lineage>
</organism>
<sequence>MGKTNDWLDFDQLAEEKVRDALKPPSMYKVILVNDDYTPMEFVIDVLQKFFSYDVERATQLMLAVHYQGKAICGVFTAEVAETKVAMVNKYARENEHPLLCTLEKA</sequence>
<dbReference type="EMBL" id="CU928145">
    <property type="protein sequence ID" value="CAU96791.1"/>
    <property type="molecule type" value="Genomic_DNA"/>
</dbReference>
<dbReference type="RefSeq" id="WP_000520781.1">
    <property type="nucleotide sequence ID" value="NZ_CP028304.1"/>
</dbReference>
<dbReference type="SMR" id="B7LD74"/>
<dbReference type="GeneID" id="86863397"/>
<dbReference type="KEGG" id="eck:EC55989_0926"/>
<dbReference type="HOGENOM" id="CLU_134358_2_1_6"/>
<dbReference type="Proteomes" id="UP000000746">
    <property type="component" value="Chromosome"/>
</dbReference>
<dbReference type="GO" id="GO:0030163">
    <property type="term" value="P:protein catabolic process"/>
    <property type="evidence" value="ECO:0007669"/>
    <property type="project" value="InterPro"/>
</dbReference>
<dbReference type="GO" id="GO:0006508">
    <property type="term" value="P:proteolysis"/>
    <property type="evidence" value="ECO:0007669"/>
    <property type="project" value="UniProtKB-UniRule"/>
</dbReference>
<dbReference type="FunFam" id="3.30.1390.10:FF:000002">
    <property type="entry name" value="ATP-dependent Clp protease adapter protein ClpS"/>
    <property type="match status" value="1"/>
</dbReference>
<dbReference type="Gene3D" id="3.30.1390.10">
    <property type="match status" value="1"/>
</dbReference>
<dbReference type="HAMAP" id="MF_00302">
    <property type="entry name" value="ClpS"/>
    <property type="match status" value="1"/>
</dbReference>
<dbReference type="InterPro" id="IPR022935">
    <property type="entry name" value="ClpS"/>
</dbReference>
<dbReference type="InterPro" id="IPR003769">
    <property type="entry name" value="ClpS_core"/>
</dbReference>
<dbReference type="InterPro" id="IPR014719">
    <property type="entry name" value="Ribosomal_bL12_C/ClpS-like"/>
</dbReference>
<dbReference type="NCBIfam" id="NF000670">
    <property type="entry name" value="PRK00033.1-3"/>
    <property type="match status" value="1"/>
</dbReference>
<dbReference type="NCBIfam" id="NF000672">
    <property type="entry name" value="PRK00033.1-5"/>
    <property type="match status" value="1"/>
</dbReference>
<dbReference type="PANTHER" id="PTHR33473:SF19">
    <property type="entry name" value="ATP-DEPENDENT CLP PROTEASE ADAPTER PROTEIN CLPS"/>
    <property type="match status" value="1"/>
</dbReference>
<dbReference type="PANTHER" id="PTHR33473">
    <property type="entry name" value="ATP-DEPENDENT CLP PROTEASE ADAPTER PROTEIN CLPS1, CHLOROPLASTIC"/>
    <property type="match status" value="1"/>
</dbReference>
<dbReference type="Pfam" id="PF02617">
    <property type="entry name" value="ClpS"/>
    <property type="match status" value="1"/>
</dbReference>
<dbReference type="SUPFAM" id="SSF54736">
    <property type="entry name" value="ClpS-like"/>
    <property type="match status" value="1"/>
</dbReference>